<comment type="function">
    <text evidence="1">Required for maturation of 30S ribosomal subunits.</text>
</comment>
<comment type="subcellular location">
    <subcellularLocation>
        <location evidence="1">Cytoplasm</location>
    </subcellularLocation>
</comment>
<comment type="similarity">
    <text evidence="1">Belongs to the RimP family.</text>
</comment>
<reference key="1">
    <citation type="submission" date="2007-04" db="EMBL/GenBank/DDBJ databases">
        <title>Genome sequence of the thermophilic hydrogen-producing bacterium Caldicellulosiruptor saccharolyticus DSM 8903.</title>
        <authorList>
            <person name="Copeland A."/>
            <person name="Lucas S."/>
            <person name="Lapidus A."/>
            <person name="Barry K."/>
            <person name="Detter J.C."/>
            <person name="Glavina del Rio T."/>
            <person name="Hammon N."/>
            <person name="Israni S."/>
            <person name="Dalin E."/>
            <person name="Tice H."/>
            <person name="Pitluck S."/>
            <person name="Kiss H."/>
            <person name="Brettin T."/>
            <person name="Bruce D."/>
            <person name="Han C."/>
            <person name="Schmutz J."/>
            <person name="Larimer F."/>
            <person name="Land M."/>
            <person name="Hauser L."/>
            <person name="Kyrpides N."/>
            <person name="Lykidis A."/>
            <person name="van de Werken H.J.G."/>
            <person name="Verhaart M.R.A."/>
            <person name="VanFossen A.L."/>
            <person name="Lewis D.L."/>
            <person name="Nichols J.D."/>
            <person name="Goorissen H.P."/>
            <person name="van Niel E.W.J."/>
            <person name="Stams F.J.M."/>
            <person name="Willquist K.U."/>
            <person name="Ward D.E."/>
            <person name="van der Oost J."/>
            <person name="Kelly R.M."/>
            <person name="Kengen S.M.W."/>
            <person name="Richardson P."/>
        </authorList>
    </citation>
    <scope>NUCLEOTIDE SEQUENCE [LARGE SCALE GENOMIC DNA]</scope>
    <source>
        <strain>ATCC 43494 / DSM 8903 / Tp8T 6331</strain>
    </source>
</reference>
<organism>
    <name type="scientific">Caldicellulosiruptor saccharolyticus (strain ATCC 43494 / DSM 8903 / Tp8T 6331)</name>
    <dbReference type="NCBI Taxonomy" id="351627"/>
    <lineage>
        <taxon>Bacteria</taxon>
        <taxon>Bacillati</taxon>
        <taxon>Bacillota</taxon>
        <taxon>Bacillota incertae sedis</taxon>
        <taxon>Caldicellulosiruptorales</taxon>
        <taxon>Caldicellulosiruptoraceae</taxon>
        <taxon>Caldicellulosiruptor</taxon>
    </lineage>
</organism>
<sequence length="151" mass="17328">MSKVTKKVEELVKPILEKYGFDLVDIEFKKEGKKHFLRVYIDKPGGITIDDCQLVSEELSNKLDIVDPIPFSYYLEVSSPGVDRPLVNDRDFIRNKGRVVDVFLKQPIMNTTKLTGELVEKNEDVLIIMIDGENISIPFENVKKVKVAIRF</sequence>
<feature type="chain" id="PRO_1000136744" description="Ribosome maturation factor RimP">
    <location>
        <begin position="1"/>
        <end position="151"/>
    </location>
</feature>
<accession>A4XL73</accession>
<protein>
    <recommendedName>
        <fullName evidence="1">Ribosome maturation factor RimP</fullName>
    </recommendedName>
</protein>
<dbReference type="EMBL" id="CP000679">
    <property type="protein sequence ID" value="ABP67658.1"/>
    <property type="molecule type" value="Genomic_DNA"/>
</dbReference>
<dbReference type="RefSeq" id="WP_011917593.1">
    <property type="nucleotide sequence ID" value="NC_009437.1"/>
</dbReference>
<dbReference type="SMR" id="A4XL73"/>
<dbReference type="STRING" id="351627.Csac_2073"/>
<dbReference type="KEGG" id="csc:Csac_2073"/>
<dbReference type="eggNOG" id="COG0779">
    <property type="taxonomic scope" value="Bacteria"/>
</dbReference>
<dbReference type="HOGENOM" id="CLU_070525_2_2_9"/>
<dbReference type="OrthoDB" id="9805006at2"/>
<dbReference type="Proteomes" id="UP000000256">
    <property type="component" value="Chromosome"/>
</dbReference>
<dbReference type="GO" id="GO:0005829">
    <property type="term" value="C:cytosol"/>
    <property type="evidence" value="ECO:0007669"/>
    <property type="project" value="TreeGrafter"/>
</dbReference>
<dbReference type="GO" id="GO:0000028">
    <property type="term" value="P:ribosomal small subunit assembly"/>
    <property type="evidence" value="ECO:0007669"/>
    <property type="project" value="TreeGrafter"/>
</dbReference>
<dbReference type="GO" id="GO:0006412">
    <property type="term" value="P:translation"/>
    <property type="evidence" value="ECO:0007669"/>
    <property type="project" value="TreeGrafter"/>
</dbReference>
<dbReference type="CDD" id="cd01734">
    <property type="entry name" value="YlxS_C"/>
    <property type="match status" value="1"/>
</dbReference>
<dbReference type="FunFam" id="3.30.300.70:FF:000001">
    <property type="entry name" value="Ribosome maturation factor RimP"/>
    <property type="match status" value="1"/>
</dbReference>
<dbReference type="Gene3D" id="2.30.30.180">
    <property type="entry name" value="Ribosome maturation factor RimP, C-terminal domain"/>
    <property type="match status" value="1"/>
</dbReference>
<dbReference type="Gene3D" id="3.30.300.70">
    <property type="entry name" value="RimP-like superfamily, N-terminal"/>
    <property type="match status" value="1"/>
</dbReference>
<dbReference type="HAMAP" id="MF_01077">
    <property type="entry name" value="RimP"/>
    <property type="match status" value="1"/>
</dbReference>
<dbReference type="InterPro" id="IPR003728">
    <property type="entry name" value="Ribosome_maturation_RimP"/>
</dbReference>
<dbReference type="InterPro" id="IPR028998">
    <property type="entry name" value="RimP_C"/>
</dbReference>
<dbReference type="InterPro" id="IPR036847">
    <property type="entry name" value="RimP_C_sf"/>
</dbReference>
<dbReference type="InterPro" id="IPR028989">
    <property type="entry name" value="RimP_N"/>
</dbReference>
<dbReference type="InterPro" id="IPR035956">
    <property type="entry name" value="RimP_N_sf"/>
</dbReference>
<dbReference type="PANTHER" id="PTHR33867">
    <property type="entry name" value="RIBOSOME MATURATION FACTOR RIMP"/>
    <property type="match status" value="1"/>
</dbReference>
<dbReference type="PANTHER" id="PTHR33867:SF1">
    <property type="entry name" value="RIBOSOME MATURATION FACTOR RIMP"/>
    <property type="match status" value="1"/>
</dbReference>
<dbReference type="Pfam" id="PF17384">
    <property type="entry name" value="DUF150_C"/>
    <property type="match status" value="1"/>
</dbReference>
<dbReference type="Pfam" id="PF02576">
    <property type="entry name" value="RimP_N"/>
    <property type="match status" value="1"/>
</dbReference>
<dbReference type="SUPFAM" id="SSF74942">
    <property type="entry name" value="YhbC-like, C-terminal domain"/>
    <property type="match status" value="1"/>
</dbReference>
<dbReference type="SUPFAM" id="SSF75420">
    <property type="entry name" value="YhbC-like, N-terminal domain"/>
    <property type="match status" value="1"/>
</dbReference>
<keyword id="KW-0963">Cytoplasm</keyword>
<keyword id="KW-0690">Ribosome biogenesis</keyword>
<name>RIMP_CALS8</name>
<gene>
    <name evidence="1" type="primary">rimP</name>
    <name type="ordered locus">Csac_2073</name>
</gene>
<evidence type="ECO:0000255" key="1">
    <source>
        <dbReference type="HAMAP-Rule" id="MF_01077"/>
    </source>
</evidence>
<proteinExistence type="inferred from homology"/>